<gene>
    <name evidence="1" type="primary">rpsK</name>
    <name type="ordered locus">NE0424</name>
</gene>
<evidence type="ECO:0000255" key="1">
    <source>
        <dbReference type="HAMAP-Rule" id="MF_01310"/>
    </source>
</evidence>
<evidence type="ECO:0000305" key="2"/>
<sequence>MVKPSLKIRKKVKKNVVEGVAHIHASFNNTIVTISDRQGNALSWATSGGVGFKGSRKSTPFAAQVAAEHAGRAALEYGVKNLEVRVKGPGPGRDSAVRALNATGFKITSITDVTPIPHNGCRPPKKRRI</sequence>
<comment type="function">
    <text evidence="1">Located on the platform of the 30S subunit, it bridges several disparate RNA helices of the 16S rRNA. Forms part of the Shine-Dalgarno cleft in the 70S ribosome.</text>
</comment>
<comment type="subunit">
    <text evidence="1">Part of the 30S ribosomal subunit. Interacts with proteins S7 and S18. Binds to IF-3.</text>
</comment>
<comment type="similarity">
    <text evidence="1">Belongs to the universal ribosomal protein uS11 family.</text>
</comment>
<keyword id="KW-1185">Reference proteome</keyword>
<keyword id="KW-0687">Ribonucleoprotein</keyword>
<keyword id="KW-0689">Ribosomal protein</keyword>
<keyword id="KW-0694">RNA-binding</keyword>
<keyword id="KW-0699">rRNA-binding</keyword>
<proteinExistence type="inferred from homology"/>
<organism>
    <name type="scientific">Nitrosomonas europaea (strain ATCC 19718 / CIP 103999 / KCTC 2705 / NBRC 14298)</name>
    <dbReference type="NCBI Taxonomy" id="228410"/>
    <lineage>
        <taxon>Bacteria</taxon>
        <taxon>Pseudomonadati</taxon>
        <taxon>Pseudomonadota</taxon>
        <taxon>Betaproteobacteria</taxon>
        <taxon>Nitrosomonadales</taxon>
        <taxon>Nitrosomonadaceae</taxon>
        <taxon>Nitrosomonas</taxon>
    </lineage>
</organism>
<protein>
    <recommendedName>
        <fullName evidence="1">Small ribosomal subunit protein uS11</fullName>
    </recommendedName>
    <alternativeName>
        <fullName evidence="2">30S ribosomal protein S11</fullName>
    </alternativeName>
</protein>
<accession>Q82X71</accession>
<name>RS11_NITEU</name>
<reference key="1">
    <citation type="journal article" date="2003" name="J. Bacteriol.">
        <title>Complete genome sequence of the ammonia-oxidizing bacterium and obligate chemolithoautotroph Nitrosomonas europaea.</title>
        <authorList>
            <person name="Chain P."/>
            <person name="Lamerdin J.E."/>
            <person name="Larimer F.W."/>
            <person name="Regala W."/>
            <person name="Lao V."/>
            <person name="Land M.L."/>
            <person name="Hauser L."/>
            <person name="Hooper A.B."/>
            <person name="Klotz M.G."/>
            <person name="Norton J."/>
            <person name="Sayavedra-Soto L.A."/>
            <person name="Arciero D.M."/>
            <person name="Hommes N.G."/>
            <person name="Whittaker M.M."/>
            <person name="Arp D.J."/>
        </authorList>
    </citation>
    <scope>NUCLEOTIDE SEQUENCE [LARGE SCALE GENOMIC DNA]</scope>
    <source>
        <strain>ATCC 19718 / CIP 103999 / KCTC 2705 / NBRC 14298</strain>
    </source>
</reference>
<feature type="chain" id="PRO_0000123188" description="Small ribosomal subunit protein uS11">
    <location>
        <begin position="1"/>
        <end position="129"/>
    </location>
</feature>
<dbReference type="EMBL" id="AL954747">
    <property type="protein sequence ID" value="CAD84335.1"/>
    <property type="molecule type" value="Genomic_DNA"/>
</dbReference>
<dbReference type="RefSeq" id="WP_011111059.1">
    <property type="nucleotide sequence ID" value="NC_004757.1"/>
</dbReference>
<dbReference type="SMR" id="Q82X71"/>
<dbReference type="STRING" id="228410.NE0424"/>
<dbReference type="GeneID" id="87103631"/>
<dbReference type="KEGG" id="neu:NE0424"/>
<dbReference type="eggNOG" id="COG0100">
    <property type="taxonomic scope" value="Bacteria"/>
</dbReference>
<dbReference type="HOGENOM" id="CLU_072439_5_0_4"/>
<dbReference type="OrthoDB" id="9806415at2"/>
<dbReference type="PhylomeDB" id="Q82X71"/>
<dbReference type="Proteomes" id="UP000001416">
    <property type="component" value="Chromosome"/>
</dbReference>
<dbReference type="GO" id="GO:1990904">
    <property type="term" value="C:ribonucleoprotein complex"/>
    <property type="evidence" value="ECO:0007669"/>
    <property type="project" value="UniProtKB-KW"/>
</dbReference>
<dbReference type="GO" id="GO:0005840">
    <property type="term" value="C:ribosome"/>
    <property type="evidence" value="ECO:0007669"/>
    <property type="project" value="UniProtKB-KW"/>
</dbReference>
<dbReference type="GO" id="GO:0019843">
    <property type="term" value="F:rRNA binding"/>
    <property type="evidence" value="ECO:0007669"/>
    <property type="project" value="UniProtKB-UniRule"/>
</dbReference>
<dbReference type="GO" id="GO:0003735">
    <property type="term" value="F:structural constituent of ribosome"/>
    <property type="evidence" value="ECO:0007669"/>
    <property type="project" value="InterPro"/>
</dbReference>
<dbReference type="GO" id="GO:0006412">
    <property type="term" value="P:translation"/>
    <property type="evidence" value="ECO:0007669"/>
    <property type="project" value="UniProtKB-UniRule"/>
</dbReference>
<dbReference type="FunFam" id="3.30.420.80:FF:000001">
    <property type="entry name" value="30S ribosomal protein S11"/>
    <property type="match status" value="1"/>
</dbReference>
<dbReference type="Gene3D" id="3.30.420.80">
    <property type="entry name" value="Ribosomal protein S11"/>
    <property type="match status" value="1"/>
</dbReference>
<dbReference type="HAMAP" id="MF_01310">
    <property type="entry name" value="Ribosomal_uS11"/>
    <property type="match status" value="1"/>
</dbReference>
<dbReference type="InterPro" id="IPR001971">
    <property type="entry name" value="Ribosomal_uS11"/>
</dbReference>
<dbReference type="InterPro" id="IPR019981">
    <property type="entry name" value="Ribosomal_uS11_bac-type"/>
</dbReference>
<dbReference type="InterPro" id="IPR018102">
    <property type="entry name" value="Ribosomal_uS11_CS"/>
</dbReference>
<dbReference type="InterPro" id="IPR036967">
    <property type="entry name" value="Ribosomal_uS11_sf"/>
</dbReference>
<dbReference type="NCBIfam" id="NF003698">
    <property type="entry name" value="PRK05309.1"/>
    <property type="match status" value="1"/>
</dbReference>
<dbReference type="NCBIfam" id="TIGR03632">
    <property type="entry name" value="uS11_bact"/>
    <property type="match status" value="1"/>
</dbReference>
<dbReference type="PANTHER" id="PTHR11759">
    <property type="entry name" value="40S RIBOSOMAL PROTEIN S14/30S RIBOSOMAL PROTEIN S11"/>
    <property type="match status" value="1"/>
</dbReference>
<dbReference type="Pfam" id="PF00411">
    <property type="entry name" value="Ribosomal_S11"/>
    <property type="match status" value="1"/>
</dbReference>
<dbReference type="PIRSF" id="PIRSF002131">
    <property type="entry name" value="Ribosomal_S11"/>
    <property type="match status" value="1"/>
</dbReference>
<dbReference type="SUPFAM" id="SSF53137">
    <property type="entry name" value="Translational machinery components"/>
    <property type="match status" value="1"/>
</dbReference>
<dbReference type="PROSITE" id="PS00054">
    <property type="entry name" value="RIBOSOMAL_S11"/>
    <property type="match status" value="1"/>
</dbReference>